<reference key="1">
    <citation type="journal article" date="2010" name="Appl. Environ. Microbiol.">
        <title>The genome sequence of Psychrobacter arcticus 273-4, a psychroactive Siberian permafrost bacterium, reveals mechanisms for adaptation to low-temperature growth.</title>
        <authorList>
            <person name="Ayala-del-Rio H.L."/>
            <person name="Chain P.S."/>
            <person name="Grzymski J.J."/>
            <person name="Ponder M.A."/>
            <person name="Ivanova N."/>
            <person name="Bergholz P.W."/>
            <person name="Di Bartolo G."/>
            <person name="Hauser L."/>
            <person name="Land M."/>
            <person name="Bakermans C."/>
            <person name="Rodrigues D."/>
            <person name="Klappenbach J."/>
            <person name="Zarka D."/>
            <person name="Larimer F."/>
            <person name="Richardson P."/>
            <person name="Murray A."/>
            <person name="Thomashow M."/>
            <person name="Tiedje J.M."/>
        </authorList>
    </citation>
    <scope>NUCLEOTIDE SEQUENCE [LARGE SCALE GENOMIC DNA]</scope>
    <source>
        <strain>DSM 17307 / VKM B-2377 / 273-4</strain>
    </source>
</reference>
<evidence type="ECO:0000255" key="1">
    <source>
        <dbReference type="HAMAP-Rule" id="MF_01321"/>
    </source>
</evidence>
<keyword id="KW-0240">DNA-directed RNA polymerase</keyword>
<keyword id="KW-0548">Nucleotidyltransferase</keyword>
<keyword id="KW-1185">Reference proteome</keyword>
<keyword id="KW-0804">Transcription</keyword>
<keyword id="KW-0808">Transferase</keyword>
<protein>
    <recommendedName>
        <fullName evidence="1">DNA-directed RNA polymerase subunit beta</fullName>
        <shortName evidence="1">RNAP subunit beta</shortName>
        <ecNumber evidence="1">2.7.7.6</ecNumber>
    </recommendedName>
    <alternativeName>
        <fullName evidence="1">RNA polymerase subunit beta</fullName>
    </alternativeName>
    <alternativeName>
        <fullName evidence="1">Transcriptase subunit beta</fullName>
    </alternativeName>
</protein>
<dbReference type="EC" id="2.7.7.6" evidence="1"/>
<dbReference type="EMBL" id="CP000082">
    <property type="protein sequence ID" value="AAZ19735.1"/>
    <property type="molecule type" value="Genomic_DNA"/>
</dbReference>
<dbReference type="RefSeq" id="WP_011281145.1">
    <property type="nucleotide sequence ID" value="NC_007204.1"/>
</dbReference>
<dbReference type="SMR" id="Q4FQH3"/>
<dbReference type="STRING" id="259536.Psyc_1887"/>
<dbReference type="KEGG" id="par:Psyc_1887"/>
<dbReference type="eggNOG" id="COG0085">
    <property type="taxonomic scope" value="Bacteria"/>
</dbReference>
<dbReference type="HOGENOM" id="CLU_000524_4_3_6"/>
<dbReference type="OrthoDB" id="9803954at2"/>
<dbReference type="Proteomes" id="UP000000546">
    <property type="component" value="Chromosome"/>
</dbReference>
<dbReference type="GO" id="GO:0000428">
    <property type="term" value="C:DNA-directed RNA polymerase complex"/>
    <property type="evidence" value="ECO:0007669"/>
    <property type="project" value="UniProtKB-KW"/>
</dbReference>
<dbReference type="GO" id="GO:0003677">
    <property type="term" value="F:DNA binding"/>
    <property type="evidence" value="ECO:0007669"/>
    <property type="project" value="UniProtKB-UniRule"/>
</dbReference>
<dbReference type="GO" id="GO:0003899">
    <property type="term" value="F:DNA-directed RNA polymerase activity"/>
    <property type="evidence" value="ECO:0007669"/>
    <property type="project" value="UniProtKB-UniRule"/>
</dbReference>
<dbReference type="GO" id="GO:0032549">
    <property type="term" value="F:ribonucleoside binding"/>
    <property type="evidence" value="ECO:0007669"/>
    <property type="project" value="InterPro"/>
</dbReference>
<dbReference type="GO" id="GO:0006351">
    <property type="term" value="P:DNA-templated transcription"/>
    <property type="evidence" value="ECO:0007669"/>
    <property type="project" value="UniProtKB-UniRule"/>
</dbReference>
<dbReference type="CDD" id="cd00653">
    <property type="entry name" value="RNA_pol_B_RPB2"/>
    <property type="match status" value="1"/>
</dbReference>
<dbReference type="FunFam" id="2.40.50.100:FF:000006">
    <property type="entry name" value="DNA-directed RNA polymerase subunit beta"/>
    <property type="match status" value="1"/>
</dbReference>
<dbReference type="FunFam" id="2.40.50.150:FF:000001">
    <property type="entry name" value="DNA-directed RNA polymerase subunit beta"/>
    <property type="match status" value="1"/>
</dbReference>
<dbReference type="FunFam" id="3.90.1110.10:FF:000001">
    <property type="entry name" value="DNA-directed RNA polymerase subunit beta"/>
    <property type="match status" value="1"/>
</dbReference>
<dbReference type="FunFam" id="3.90.1800.10:FF:000001">
    <property type="entry name" value="DNA-directed RNA polymerase subunit beta"/>
    <property type="match status" value="1"/>
</dbReference>
<dbReference type="Gene3D" id="2.40.50.100">
    <property type="match status" value="1"/>
</dbReference>
<dbReference type="Gene3D" id="2.40.50.150">
    <property type="match status" value="1"/>
</dbReference>
<dbReference type="Gene3D" id="3.90.1100.10">
    <property type="match status" value="2"/>
</dbReference>
<dbReference type="Gene3D" id="2.30.150.10">
    <property type="entry name" value="DNA-directed RNA polymerase, beta subunit, external 1 domain"/>
    <property type="match status" value="1"/>
</dbReference>
<dbReference type="Gene3D" id="2.40.270.10">
    <property type="entry name" value="DNA-directed RNA polymerase, subunit 2, domain 6"/>
    <property type="match status" value="1"/>
</dbReference>
<dbReference type="Gene3D" id="3.90.1800.10">
    <property type="entry name" value="RNA polymerase alpha subunit dimerisation domain"/>
    <property type="match status" value="1"/>
</dbReference>
<dbReference type="Gene3D" id="3.90.1110.10">
    <property type="entry name" value="RNA polymerase Rpb2, domain 2"/>
    <property type="match status" value="1"/>
</dbReference>
<dbReference type="HAMAP" id="MF_01321">
    <property type="entry name" value="RNApol_bact_RpoB"/>
    <property type="match status" value="1"/>
</dbReference>
<dbReference type="InterPro" id="IPR042107">
    <property type="entry name" value="DNA-dir_RNA_pol_bsu_ext_1_sf"/>
</dbReference>
<dbReference type="InterPro" id="IPR019462">
    <property type="entry name" value="DNA-dir_RNA_pol_bsu_external_1"/>
</dbReference>
<dbReference type="InterPro" id="IPR015712">
    <property type="entry name" value="DNA-dir_RNA_pol_su2"/>
</dbReference>
<dbReference type="InterPro" id="IPR007120">
    <property type="entry name" value="DNA-dir_RNAP_su2_dom"/>
</dbReference>
<dbReference type="InterPro" id="IPR037033">
    <property type="entry name" value="DNA-dir_RNAP_su2_hyb_sf"/>
</dbReference>
<dbReference type="InterPro" id="IPR010243">
    <property type="entry name" value="RNA_pol_bsu_bac"/>
</dbReference>
<dbReference type="InterPro" id="IPR007121">
    <property type="entry name" value="RNA_pol_bsu_CS"/>
</dbReference>
<dbReference type="InterPro" id="IPR007644">
    <property type="entry name" value="RNA_pol_bsu_protrusion"/>
</dbReference>
<dbReference type="InterPro" id="IPR007642">
    <property type="entry name" value="RNA_pol_Rpb2_2"/>
</dbReference>
<dbReference type="InterPro" id="IPR037034">
    <property type="entry name" value="RNA_pol_Rpb2_2_sf"/>
</dbReference>
<dbReference type="InterPro" id="IPR007645">
    <property type="entry name" value="RNA_pol_Rpb2_3"/>
</dbReference>
<dbReference type="InterPro" id="IPR007641">
    <property type="entry name" value="RNA_pol_Rpb2_7"/>
</dbReference>
<dbReference type="InterPro" id="IPR014724">
    <property type="entry name" value="RNA_pol_RPB2_OB-fold"/>
</dbReference>
<dbReference type="NCBIfam" id="NF001616">
    <property type="entry name" value="PRK00405.1"/>
    <property type="match status" value="1"/>
</dbReference>
<dbReference type="NCBIfam" id="TIGR02013">
    <property type="entry name" value="rpoB"/>
    <property type="match status" value="1"/>
</dbReference>
<dbReference type="PANTHER" id="PTHR20856">
    <property type="entry name" value="DNA-DIRECTED RNA POLYMERASE I SUBUNIT 2"/>
    <property type="match status" value="1"/>
</dbReference>
<dbReference type="Pfam" id="PF04563">
    <property type="entry name" value="RNA_pol_Rpb2_1"/>
    <property type="match status" value="1"/>
</dbReference>
<dbReference type="Pfam" id="PF04561">
    <property type="entry name" value="RNA_pol_Rpb2_2"/>
    <property type="match status" value="2"/>
</dbReference>
<dbReference type="Pfam" id="PF04565">
    <property type="entry name" value="RNA_pol_Rpb2_3"/>
    <property type="match status" value="1"/>
</dbReference>
<dbReference type="Pfam" id="PF10385">
    <property type="entry name" value="RNA_pol_Rpb2_45"/>
    <property type="match status" value="1"/>
</dbReference>
<dbReference type="Pfam" id="PF00562">
    <property type="entry name" value="RNA_pol_Rpb2_6"/>
    <property type="match status" value="1"/>
</dbReference>
<dbReference type="Pfam" id="PF04560">
    <property type="entry name" value="RNA_pol_Rpb2_7"/>
    <property type="match status" value="1"/>
</dbReference>
<dbReference type="SUPFAM" id="SSF64484">
    <property type="entry name" value="beta and beta-prime subunits of DNA dependent RNA-polymerase"/>
    <property type="match status" value="1"/>
</dbReference>
<dbReference type="PROSITE" id="PS01166">
    <property type="entry name" value="RNA_POL_BETA"/>
    <property type="match status" value="1"/>
</dbReference>
<feature type="chain" id="PRO_0000224098" description="DNA-directed RNA polymerase subunit beta">
    <location>
        <begin position="1"/>
        <end position="1372"/>
    </location>
</feature>
<sequence>MAYSYTEKKRIRKSFAELPTVMDIPYLLSIQVDSYEQFLQEHKKPKARENTGLQAAYSSIFPIESHSGNAELQFVEYYLGTPEFDERECILRGSTFAAPMRVKIRLIIKDKDSKDKDSKAAIKDIREQSVYMGEMPLMTANGTFIINGTERVIVSQLHRSPGVFFDHDKGKSHSSGKVLYNARIIPYRGSWLDFEFDAKDLVFARIDRRRKLLASIILRALGLSTSEILDLFFDKVKVYKGEEQFEIDLVADRLRGEMAQFDIVTPEGDVVVEQGKRINARRIRQLEEAGMTKISIPDEYLYERILAEDIIVNDEVIARANTLIDHELLVKLSAFEASESIKEFSILFTNDIDQGSYIADTLRADSTSSREEALIEIYKVMRPGEPPTVETAEKLFDSMFFNADRYDLSNVGRMKFNRRLGLDFVDTDDADIQRERSVLTNADIVNVLKELIEIRNGRGEVDDIDHLGNRRIRSVGEMAENQFRVGLVRVERAVKERLSSAESDNLSPQDLINSKPVAAAVKEFFGSSQLSQFMDQNNPLSEVTHKRRVSALGPGGLTRERAGFEVRDVHDTHYGRVCPIETPEGPNIGLINSLATFAKTNSFGFLETPYRRVVDGKVTDVIEYLSAIEEVGTVIAQADSPVTADGALSDEMVSVRSYGEFVRMPPEKVTHMDVSPSQVVSVAAGLIPFLEHDDANRALMGSNMQRQAVPTLRADKPLVGTGMERHVARDSGVCVIAKRGGVIEDVDASRIVVRVNEAEMIAGEAGIDIYNLVKYTRSNQNTCINQRIIVNQGDEIAFGDILADGPSTDLGELALGQNIRIAFMPWNGYNFEDSILLSEKVVKEDRFTTIHIQELTCVARDTKLGTEEITADIPNVGEAALSSLDEAGIVYIGAEVDAGDILVGKVTPKGETQLTPEEKLLRAIFGEKAADVKDTSLRVPTSSKGTVIDVQVFTRDGVEKDARARAIEKSQLDSYRKDLKEELRIFEEAARGRIGNLLDGQKVSGGSGLKAGTIMALADMKDMSLETLLDIQPVEEEISERLTQIAEYLVDKQKDIDVKFAEKKRKLTAGDDLQHGVQKIVKVYLAVKRRIQPGDKMAGRHGNKGVVSRIMPVEDMPYDEHGNTVDIVLNPLGVPSRMNIGQVLETHLGMAAKGLGEKIDGMLKSQAAIKDLREFLDKIYNQVGGEQVDLDSLTDDDIMALADNLRAGVPMGTAVFDGAKESQVKDLLELAGMDRDGQQTLYDGRTGQKFDRKVTVGYMYMLKLNHLVDDKMHARSTGSYSLVTQQPLGGKAQFGGQRFGEMEVWALEAYGATYTLQEMLTVKSDDVEGRTRMYKNIVDGEQYMDPGMPESFNVLTKEIKSLGINIELKQTH</sequence>
<accession>Q4FQH3</accession>
<organism>
    <name type="scientific">Psychrobacter arcticus (strain DSM 17307 / VKM B-2377 / 273-4)</name>
    <dbReference type="NCBI Taxonomy" id="259536"/>
    <lineage>
        <taxon>Bacteria</taxon>
        <taxon>Pseudomonadati</taxon>
        <taxon>Pseudomonadota</taxon>
        <taxon>Gammaproteobacteria</taxon>
        <taxon>Moraxellales</taxon>
        <taxon>Moraxellaceae</taxon>
        <taxon>Psychrobacter</taxon>
    </lineage>
</organism>
<gene>
    <name evidence="1" type="primary">rpoB</name>
    <name type="ordered locus">Psyc_1887</name>
</gene>
<name>RPOB_PSYA2</name>
<comment type="function">
    <text evidence="1">DNA-dependent RNA polymerase catalyzes the transcription of DNA into RNA using the four ribonucleoside triphosphates as substrates.</text>
</comment>
<comment type="catalytic activity">
    <reaction evidence="1">
        <text>RNA(n) + a ribonucleoside 5'-triphosphate = RNA(n+1) + diphosphate</text>
        <dbReference type="Rhea" id="RHEA:21248"/>
        <dbReference type="Rhea" id="RHEA-COMP:14527"/>
        <dbReference type="Rhea" id="RHEA-COMP:17342"/>
        <dbReference type="ChEBI" id="CHEBI:33019"/>
        <dbReference type="ChEBI" id="CHEBI:61557"/>
        <dbReference type="ChEBI" id="CHEBI:140395"/>
        <dbReference type="EC" id="2.7.7.6"/>
    </reaction>
</comment>
<comment type="subunit">
    <text evidence="1">The RNAP catalytic core consists of 2 alpha, 1 beta, 1 beta' and 1 omega subunit. When a sigma factor is associated with the core the holoenzyme is formed, which can initiate transcription.</text>
</comment>
<comment type="similarity">
    <text evidence="1">Belongs to the RNA polymerase beta chain family.</text>
</comment>
<proteinExistence type="inferred from homology"/>